<protein>
    <recommendedName>
        <fullName evidence="1">Potassium/proton antiporter CemA</fullName>
    </recommendedName>
    <alternativeName>
        <fullName evidence="1">Chloroplast envelope membrane protein A</fullName>
        <shortName evidence="1">CemA</shortName>
    </alternativeName>
</protein>
<reference key="1">
    <citation type="journal article" date="2008" name="Nature">
        <title>The draft genome of the transgenic tropical fruit tree papaya (Carica papaya Linnaeus).</title>
        <authorList>
            <person name="Ming R."/>
            <person name="Hou S."/>
            <person name="Feng Y."/>
            <person name="Yu Q."/>
            <person name="Dionne-Laporte A."/>
            <person name="Saw J.H."/>
            <person name="Senin P."/>
            <person name="Wang W."/>
            <person name="Ly B.V."/>
            <person name="Lewis K.L."/>
            <person name="Salzberg S.L."/>
            <person name="Feng L."/>
            <person name="Jones M.R."/>
            <person name="Skelton R.L."/>
            <person name="Murray J.E."/>
            <person name="Chen C."/>
            <person name="Qian W."/>
            <person name="Shen J."/>
            <person name="Du P."/>
            <person name="Eustice M."/>
            <person name="Tong E."/>
            <person name="Tang H."/>
            <person name="Lyons E."/>
            <person name="Paull R.E."/>
            <person name="Michael T.P."/>
            <person name="Wall K."/>
            <person name="Rice D.W."/>
            <person name="Albert H."/>
            <person name="Wang M.L."/>
            <person name="Zhu Y.J."/>
            <person name="Schatz M."/>
            <person name="Nagarajan N."/>
            <person name="Acob R.A."/>
            <person name="Guan P."/>
            <person name="Blas A."/>
            <person name="Wai C.M."/>
            <person name="Ackerman C.M."/>
            <person name="Ren Y."/>
            <person name="Liu C."/>
            <person name="Wang J."/>
            <person name="Wang J."/>
            <person name="Na J.K."/>
            <person name="Shakirov E.V."/>
            <person name="Haas B."/>
            <person name="Thimmapuram J."/>
            <person name="Nelson D."/>
            <person name="Wang X."/>
            <person name="Bowers J.E."/>
            <person name="Gschwend A.R."/>
            <person name="Delcher A.L."/>
            <person name="Singh R."/>
            <person name="Suzuki J.Y."/>
            <person name="Tripathi S."/>
            <person name="Neupane K."/>
            <person name="Wei H."/>
            <person name="Irikura B."/>
            <person name="Paidi M."/>
            <person name="Jiang N."/>
            <person name="Zhang W."/>
            <person name="Presting G."/>
            <person name="Windsor A."/>
            <person name="Navajas-Perez R."/>
            <person name="Torres M.J."/>
            <person name="Feltus F.A."/>
            <person name="Porter B."/>
            <person name="Li Y."/>
            <person name="Burroughs A.M."/>
            <person name="Luo M.C."/>
            <person name="Liu L."/>
            <person name="Christopher D.A."/>
            <person name="Mount S.M."/>
            <person name="Moore P.H."/>
            <person name="Sugimura T."/>
            <person name="Jiang J."/>
            <person name="Schuler M.A."/>
            <person name="Friedman V."/>
            <person name="Mitchell-Olds T."/>
            <person name="Shippen D.E."/>
            <person name="dePamphilis C.W."/>
            <person name="Palmer J.D."/>
            <person name="Freeling M."/>
            <person name="Paterson A.H."/>
            <person name="Gonsalves D."/>
            <person name="Wang L."/>
            <person name="Alam M."/>
        </authorList>
    </citation>
    <scope>NUCLEOTIDE SEQUENCE [LARGE SCALE GENOMIC DNA]</scope>
    <source>
        <strain>cv. SunUp</strain>
    </source>
</reference>
<keyword id="KW-0050">Antiport</keyword>
<keyword id="KW-0150">Chloroplast</keyword>
<keyword id="KW-0375">Hydrogen ion transport</keyword>
<keyword id="KW-0406">Ion transport</keyword>
<keyword id="KW-0472">Membrane</keyword>
<keyword id="KW-0934">Plastid</keyword>
<keyword id="KW-1001">Plastid inner membrane</keyword>
<keyword id="KW-0630">Potassium</keyword>
<keyword id="KW-0633">Potassium transport</keyword>
<keyword id="KW-0812">Transmembrane</keyword>
<keyword id="KW-1133">Transmembrane helix</keyword>
<keyword id="KW-0813">Transport</keyword>
<proteinExistence type="inferred from homology"/>
<dbReference type="EMBL" id="EU431223">
    <property type="protein sequence ID" value="ABY86794.1"/>
    <property type="molecule type" value="Genomic_DNA"/>
</dbReference>
<dbReference type="RefSeq" id="YP_001671695.1">
    <property type="nucleotide sequence ID" value="NC_010323.1"/>
</dbReference>
<dbReference type="SMR" id="B1A947"/>
<dbReference type="GeneID" id="5878417"/>
<dbReference type="KEGG" id="cpap:5878417"/>
<dbReference type="OrthoDB" id="1023137at2759"/>
<dbReference type="GO" id="GO:0009706">
    <property type="term" value="C:chloroplast inner membrane"/>
    <property type="evidence" value="ECO:0007669"/>
    <property type="project" value="UniProtKB-SubCell"/>
</dbReference>
<dbReference type="GO" id="GO:0015297">
    <property type="term" value="F:antiporter activity"/>
    <property type="evidence" value="ECO:0007669"/>
    <property type="project" value="UniProtKB-KW"/>
</dbReference>
<dbReference type="GO" id="GO:0015078">
    <property type="term" value="F:proton transmembrane transporter activity"/>
    <property type="evidence" value="ECO:0007669"/>
    <property type="project" value="UniProtKB-UniRule"/>
</dbReference>
<dbReference type="GO" id="GO:0006813">
    <property type="term" value="P:potassium ion transport"/>
    <property type="evidence" value="ECO:0007669"/>
    <property type="project" value="UniProtKB-UniRule"/>
</dbReference>
<dbReference type="HAMAP" id="MF_01308">
    <property type="entry name" value="CemA_PxcA"/>
    <property type="match status" value="1"/>
</dbReference>
<dbReference type="InterPro" id="IPR004282">
    <property type="entry name" value="CemA"/>
</dbReference>
<dbReference type="PANTHER" id="PTHR33650:SF2">
    <property type="entry name" value="CHLOROPLAST ENVELOPE MEMBRANE PROTEIN"/>
    <property type="match status" value="1"/>
</dbReference>
<dbReference type="PANTHER" id="PTHR33650">
    <property type="entry name" value="CHLOROPLAST ENVELOPE MEMBRANE PROTEIN-RELATED"/>
    <property type="match status" value="1"/>
</dbReference>
<dbReference type="Pfam" id="PF03040">
    <property type="entry name" value="CemA"/>
    <property type="match status" value="1"/>
</dbReference>
<geneLocation type="chloroplast"/>
<name>CEMA_CARPA</name>
<feature type="chain" id="PRO_0000346540" description="Potassium/proton antiporter CemA">
    <location>
        <begin position="1"/>
        <end position="229"/>
    </location>
</feature>
<feature type="transmembrane region" description="Helical" evidence="1">
    <location>
        <begin position="6"/>
        <end position="26"/>
    </location>
</feature>
<feature type="transmembrane region" description="Helical" evidence="1">
    <location>
        <begin position="114"/>
        <end position="134"/>
    </location>
</feature>
<feature type="transmembrane region" description="Helical" evidence="1">
    <location>
        <begin position="189"/>
        <end position="209"/>
    </location>
</feature>
<evidence type="ECO:0000255" key="1">
    <source>
        <dbReference type="HAMAP-Rule" id="MF_01308"/>
    </source>
</evidence>
<evidence type="ECO:0000305" key="2"/>
<sequence length="229" mass="26981">MAKKKAFIPFLYLASIVFLPWWISLSCNKSLKTWITNSWNTRQSETFLNDIQEKSLLEKFIQLEELFLLDEMIKEDPETHLQKLRIGIHKETIQFIQMYNEDRIHTILHFSTNILCFVILSGYSILGNEELLIINSWVQEFLYNLSDTIKAFSILLLTDLCIGFHSPHGWELMIGYIYKDFGFAHNDQIISGLVSTFPVILDTIFKYWIFRYLNRVSPSLVVIYHSIND</sequence>
<comment type="function">
    <text evidence="1">Contributes to K(+)/H(+) antiport activity by supporting proton efflux to control proton extrusion and homeostasis in chloroplasts in a light-dependent manner to modulate photosynthesis. Prevents excessive induction of non-photochemical quenching (NPQ) under continuous-light conditions. Indirectly promotes efficient inorganic carbon uptake into chloroplasts.</text>
</comment>
<comment type="catalytic activity">
    <reaction evidence="1">
        <text>K(+)(in) + H(+)(out) = K(+)(out) + H(+)(in)</text>
        <dbReference type="Rhea" id="RHEA:29467"/>
        <dbReference type="ChEBI" id="CHEBI:15378"/>
        <dbReference type="ChEBI" id="CHEBI:29103"/>
    </reaction>
</comment>
<comment type="subcellular location">
    <subcellularLocation>
        <location evidence="1">Plastid</location>
        <location evidence="1">Chloroplast inner membrane</location>
        <topology evidence="1">Multi-pass membrane protein</topology>
    </subcellularLocation>
</comment>
<comment type="similarity">
    <text evidence="1 2">Belongs to the CemA family.</text>
</comment>
<accession>B1A947</accession>
<organism>
    <name type="scientific">Carica papaya</name>
    <name type="common">Papaya</name>
    <dbReference type="NCBI Taxonomy" id="3649"/>
    <lineage>
        <taxon>Eukaryota</taxon>
        <taxon>Viridiplantae</taxon>
        <taxon>Streptophyta</taxon>
        <taxon>Embryophyta</taxon>
        <taxon>Tracheophyta</taxon>
        <taxon>Spermatophyta</taxon>
        <taxon>Magnoliopsida</taxon>
        <taxon>eudicotyledons</taxon>
        <taxon>Gunneridae</taxon>
        <taxon>Pentapetalae</taxon>
        <taxon>rosids</taxon>
        <taxon>malvids</taxon>
        <taxon>Brassicales</taxon>
        <taxon>Caricaceae</taxon>
        <taxon>Carica</taxon>
    </lineage>
</organism>
<gene>
    <name evidence="1" type="primary">cemA</name>
</gene>